<proteinExistence type="inferred from homology"/>
<reference key="1">
    <citation type="journal article" date="1990" name="J. Virol.">
        <title>Similarity of the outer capsid protein VP4 of the Gottfried strain of porcine rotavirus to that of asymptomatic human rotavirus strains.</title>
        <authorList>
            <person name="Gorziglia M."/>
            <person name="Nishikawa K."/>
            <person name="Hoshino Y."/>
            <person name="Taniguchi K."/>
        </authorList>
    </citation>
    <scope>NUCLEOTIDE SEQUENCE [GENOMIC RNA]</scope>
</reference>
<reference key="2">
    <citation type="journal article" date="2006" name="Glycoconj. J.">
        <title>Role of sialic acids in rotavirus infection.</title>
        <authorList>
            <person name="Isa P."/>
            <person name="Arias C.F."/>
            <person name="Lopez S."/>
        </authorList>
    </citation>
    <scope>REVIEW</scope>
</reference>
<organism>
    <name type="scientific">Rotavirus A (strain RVA/Pig/United States/Gottfried/1983/G4P2B[6])</name>
    <name type="common">RV-A</name>
    <dbReference type="NCBI Taxonomy" id="10917"/>
    <lineage>
        <taxon>Viruses</taxon>
        <taxon>Riboviria</taxon>
        <taxon>Orthornavirae</taxon>
        <taxon>Duplornaviricota</taxon>
        <taxon>Resentoviricetes</taxon>
        <taxon>Reovirales</taxon>
        <taxon>Sedoreoviridae</taxon>
        <taxon>Rotavirus</taxon>
        <taxon>Rotavirus A</taxon>
    </lineage>
</organism>
<name>VP4_ROTPG</name>
<dbReference type="EMBL" id="M33516">
    <property type="protein sequence ID" value="AAA47095.1"/>
    <property type="molecule type" value="Genomic_RNA"/>
</dbReference>
<dbReference type="PIR" id="A33563">
    <property type="entry name" value="VPXRPG"/>
</dbReference>
<dbReference type="SMR" id="P23045"/>
<dbReference type="GO" id="GO:0044172">
    <property type="term" value="C:host cell endoplasmic reticulum-Golgi intermediate compartment"/>
    <property type="evidence" value="ECO:0007669"/>
    <property type="project" value="UniProtKB-SubCell"/>
</dbReference>
<dbReference type="GO" id="GO:0020002">
    <property type="term" value="C:host cell plasma membrane"/>
    <property type="evidence" value="ECO:0007669"/>
    <property type="project" value="UniProtKB-SubCell"/>
</dbReference>
<dbReference type="GO" id="GO:0044168">
    <property type="term" value="C:host cell rough endoplasmic reticulum"/>
    <property type="evidence" value="ECO:0007669"/>
    <property type="project" value="UniProtKB-SubCell"/>
</dbReference>
<dbReference type="GO" id="GO:0044163">
    <property type="term" value="C:host cytoskeleton"/>
    <property type="evidence" value="ECO:0007669"/>
    <property type="project" value="UniProtKB-SubCell"/>
</dbReference>
<dbReference type="GO" id="GO:0016020">
    <property type="term" value="C:membrane"/>
    <property type="evidence" value="ECO:0007669"/>
    <property type="project" value="UniProtKB-KW"/>
</dbReference>
<dbReference type="GO" id="GO:0039624">
    <property type="term" value="C:viral outer capsid"/>
    <property type="evidence" value="ECO:0007669"/>
    <property type="project" value="UniProtKB-UniRule"/>
</dbReference>
<dbReference type="GO" id="GO:0039665">
    <property type="term" value="P:permeabilization of host organelle membrane involved in viral entry into host cell"/>
    <property type="evidence" value="ECO:0007669"/>
    <property type="project" value="UniProtKB-UniRule"/>
</dbReference>
<dbReference type="GO" id="GO:0019062">
    <property type="term" value="P:virion attachment to host cell"/>
    <property type="evidence" value="ECO:0007669"/>
    <property type="project" value="UniProtKB-UniRule"/>
</dbReference>
<dbReference type="Gene3D" id="1.20.5.170">
    <property type="match status" value="1"/>
</dbReference>
<dbReference type="Gene3D" id="2.60.120.200">
    <property type="match status" value="1"/>
</dbReference>
<dbReference type="HAMAP" id="MF_04132">
    <property type="entry name" value="Rota_A_VP4"/>
    <property type="match status" value="1"/>
</dbReference>
<dbReference type="HAMAP" id="MF_04125">
    <property type="entry name" value="Rota_VP4"/>
    <property type="match status" value="1"/>
</dbReference>
<dbReference type="InterPro" id="IPR013320">
    <property type="entry name" value="ConA-like_dom_sf"/>
</dbReference>
<dbReference type="InterPro" id="IPR042546">
    <property type="entry name" value="Rota_A_VP4"/>
</dbReference>
<dbReference type="InterPro" id="IPR035330">
    <property type="entry name" value="Rota_VP4_MID"/>
</dbReference>
<dbReference type="InterPro" id="IPR038017">
    <property type="entry name" value="Rota_VP4_MID_sf"/>
</dbReference>
<dbReference type="InterPro" id="IPR000416">
    <property type="entry name" value="VP4_concanavalin-like"/>
</dbReference>
<dbReference type="InterPro" id="IPR035329">
    <property type="entry name" value="VP4_helical"/>
</dbReference>
<dbReference type="Pfam" id="PF17477">
    <property type="entry name" value="Rota_VP4_MID"/>
    <property type="match status" value="1"/>
</dbReference>
<dbReference type="Pfam" id="PF00426">
    <property type="entry name" value="VP4_haemagglut"/>
    <property type="match status" value="1"/>
</dbReference>
<dbReference type="Pfam" id="PF17478">
    <property type="entry name" value="VP4_helical"/>
    <property type="match status" value="1"/>
</dbReference>
<dbReference type="SUPFAM" id="SSF49899">
    <property type="entry name" value="Concanavalin A-like lectins/glucanases"/>
    <property type="match status" value="1"/>
</dbReference>
<dbReference type="SUPFAM" id="SSF111379">
    <property type="entry name" value="VP4 membrane interaction domain"/>
    <property type="match status" value="1"/>
</dbReference>
<sequence length="775" mass="87098">MASLIYRQLLTNSYTVELSDEIKTIGSEKSQNVTINPGPFAQTTYAPVTWRHGEVNDSTTVEPVLDGPYQPTSFKPPNDYWILLNPINKGVVFKGTNRTDVWVAILLIEQRVPSQDRQYTLFGEVKQITVENSSDKWKFFEMFRNNANIDFQLQRPLTSDTKLAGFLTHGGRVWTFNGETPHATTDYSTTSNLPDVEVVIHTEFYIIPRSQESKCNEYINTGLPPMQNTRNVVPVALSSRSITYQRAQVNEDIIISKTSLWKEMQYNRDITIRFKFGNSIVKLGGLGYKWSEVSFKAANYQYNYLRDGEQVTAHTTCSVNGVNNFSYNGGSLPTDFSVSRYELIKENSYVYIDYWDDSQAFKNMVYVRSLAANLNSVKCSGGNYNFKIPVGAWPVMSGGAVSLHFAGVTLSTQFTNFVSLNSLRFRFSLTVEEPSFSILRTRVSGLYGLPAANPNNGNEYYEIAGRFSLILLVPSNDDYQTPIMNSVTVRQDLERQLGDLREEFNSLSQEIAMTQLIDLALLPLDMFSMFSGIKSTIDVAKSMATNVMKKFKKSGLATSISELTGSLPSAASSVSRSSSIRSNISSISVWTDVSEQIADASNSVRSISTQTSAISKRLRLREITTQTEGMNFDDISAAVLKTPLDKSTHISPDTLPDIITESSEKFIPKRAYRVLKNDEVMEADVDGKFFAYRVDTFEEVPFDVDKFVNLATASPVISAIIDFKTLKNLNDNYGITRSQALDLIRSDPRVLRDFINQNNPIIKNRIEQLILQCRL</sequence>
<evidence type="ECO:0000255" key="1">
    <source>
        <dbReference type="HAMAP-Rule" id="MF_04132"/>
    </source>
</evidence>
<evidence type="ECO:0000303" key="2">
    <source>
    </source>
</evidence>
<keyword id="KW-0167">Capsid protein</keyword>
<keyword id="KW-0175">Coiled coil</keyword>
<keyword id="KW-1015">Disulfide bond</keyword>
<keyword id="KW-0348">Hemagglutinin</keyword>
<keyword id="KW-1032">Host cell membrane</keyword>
<keyword id="KW-1035">Host cytoplasm</keyword>
<keyword id="KW-1037">Host cytoskeleton</keyword>
<keyword id="KW-1038">Host endoplasmic reticulum</keyword>
<keyword id="KW-1043">Host membrane</keyword>
<keyword id="KW-0945">Host-virus interaction</keyword>
<keyword id="KW-0472">Membrane</keyword>
<keyword id="KW-1152">Outer capsid protein</keyword>
<keyword id="KW-1161">Viral attachment to host cell</keyword>
<keyword id="KW-1162">Viral penetration into host cytoplasm</keyword>
<keyword id="KW-1173">Viral penetration via permeabilization of host membrane</keyword>
<keyword id="KW-0946">Virion</keyword>
<keyword id="KW-1160">Virus entry into host cell</keyword>
<comment type="function">
    <molecule>Outer capsid protein VP4</molecule>
    <text evidence="1">Spike-forming protein that mediates virion attachment to the host epithelial cell receptors and plays a major role in cell penetration, determination of host range restriction and virulence. Rotavirus attachment and entry into the host cell probably involves multiple sequential contacts between the outer capsid proteins VP4 and VP7, and the cell receptors. It is subsequently lost, together with VP7, following virus entry into the host cell. Following entry into the host cell, low intracellular or intravesicular Ca(2+) concentration probably causes the calcium-stabilized VP7 trimers to dissociate from the virion. This step is probably necessary for the membrane-disrupting entry step and the release of VP4, which is locked onto the virion by VP7. During the virus exit from the host cell, VP4 seems to be required to target the newly formed virions to the host cell lipid rafts.</text>
</comment>
<comment type="function">
    <molecule>Outer capsid protein VP5*</molecule>
    <text evidence="1">Forms the spike 'foot' and 'body' and acts as a membrane permeabilization protein that mediates release of viral particles from endosomal compartments into the cytoplasm. During entry, the part of VP5* that protrudes from the virus folds back on itself and reorganizes from a local dimer to a trimer. This reorganization may be linked to membrane penetration by exposing VP5* hydrophobic region. In integrin-dependent strains, VP5* targets the integrin heterodimer ITGA2/ITGB1 for cell attachment.</text>
</comment>
<comment type="function">
    <molecule>Outer capsid protein VP8*</molecule>
    <text evidence="1">Forms the head of the spikes and mediates the recognition of specific host cell surface glycans. It is the viral hemagglutinin and an important target of neutralizing antibodies. In sialic acid-dependent strains, VP8* binds to host cell sialic acid, most probably a ganglioside, providing the initial contact. In some other strains, VP8* mediates the attachment to histo-blood group antigens (HBGAs) for viral entry.</text>
</comment>
<comment type="subunit">
    <molecule>Outer capsid protein VP4</molecule>
    <text evidence="1">Homotrimer. VP4 adopts a dimeric appearance above the capsid surface, while forming a trimeric base anchored inside the capsid layer. Only hints of the third molecule are observed above the capsid surface. It probably performs a series of molecular rearrangements during viral entry. Prior to trypsin cleavage, it is flexible. The priming trypsin cleavage triggers its rearrangement into rigid spikes with approximate two-fold symmetry of their protruding parts. After an unknown second triggering event, cleaved VP4 may undergo another rearrangement, in which two VP5* subunits fold back on themselves and join a third subunit to form a tightly associated trimer, shaped like a folded umbrella. Interacts with VP6. Interacts with VP7.</text>
</comment>
<comment type="subunit">
    <molecule>Outer capsid protein VP5*</molecule>
    <text evidence="1">Homotrimer. The trimer is coiled-coil stabilized by its C-terminus, however, its N-terminus, known as antigen domain or 'body', seems to be flexible allowing it to self-associate either as a dimer or a trimer.</text>
</comment>
<comment type="subcellular location">
    <molecule>Outer capsid protein VP4</molecule>
    <subcellularLocation>
        <location evidence="1">Virion</location>
    </subcellularLocation>
    <subcellularLocation>
        <location evidence="1">Host rough endoplasmic reticulum</location>
    </subcellularLocation>
    <subcellularLocation>
        <location evidence="1">Host cell membrane</location>
    </subcellularLocation>
    <subcellularLocation>
        <location evidence="1">Host cytoplasm</location>
        <location evidence="1">Host cytoskeleton</location>
    </subcellularLocation>
    <subcellularLocation>
        <location evidence="1">Host endoplasmic reticulum-Golgi intermediate compartment</location>
    </subcellularLocation>
    <text evidence="1">The outer layer contains 180 copies of VP4, grouped as 60 dimers. Immature double-layered particles assembled in the cytoplasm bud across the membrane of the endoplasmic reticulum, acquiring during this process a transient lipid membrane that is modified with the ER resident viral glycoproteins NSP4 and VP7; these enveloped particles also contain VP4. As the particles move towards the interior of the ER cisternae, the transient lipid membrane and the non-structural protein NSP4 are lost, while the virus surface proteins VP4 and VP7 rearrange to form the outermost virus protein layer, yielding mature infectious triple-layered particles. VP4 also seems to associate with lipid rafts of the host cell membrane probably for the exit of the virus from the infected cell by an alternate pathway.</text>
</comment>
<comment type="subcellular location">
    <molecule>Outer capsid protein VP8*</molecule>
    <subcellularLocation>
        <location evidence="1">Virion</location>
    </subcellularLocation>
    <text evidence="1">Outer capsid protein.</text>
</comment>
<comment type="subcellular location">
    <molecule>Outer capsid protein VP5*</molecule>
    <subcellularLocation>
        <location evidence="1">Virion</location>
    </subcellularLocation>
    <text evidence="1">Outer capsid protein.</text>
</comment>
<comment type="domain">
    <molecule>Outer capsid protein VP4</molecule>
    <text evidence="1">The VP4 spike is divided into a foot, a stalk and body, and a head.</text>
</comment>
<comment type="PTM">
    <molecule>Outer capsid protein VP4</molecule>
    <text evidence="1">Proteolytic cleavage by trypsin results in activation of VP4 functions and greatly increases infectivity. The penetration into the host cell is dependent on trypsin treatment of VP4. It produces two peptides, VP5* and VP8* that remain associated with the virion. Cleavage of VP4 by trypsin probably occurs in vivo in the lumen of the intestine prior to infection of enterocytes. Trypsin seems to be incorporated into the three-layered viral particles but remains inactive as long as the viral outer capsid is intact and would only be activated upon the solubilization of the latter.</text>
</comment>
<comment type="miscellaneous">
    <text evidence="2">This strain probably does not use sialic acid to attach to the host cell.</text>
</comment>
<comment type="miscellaneous">
    <text evidence="1">In group A rotaviruses, VP4 defines the P serotype.</text>
</comment>
<comment type="miscellaneous">
    <text evidence="1">Some rotavirus strains are neuraminidase-sensitive and require sialic acid to attach to the cell surface. Some rotavirus strains are integrin-dependent. Some rotavirus strains depend on ganglioside for their entry into the host cell. Hsp70 also seems to be involved in the entry of some strains.</text>
</comment>
<comment type="similarity">
    <text evidence="1">Belongs to the rotavirus VP4 family.</text>
</comment>
<organismHost>
    <name type="scientific">Sus scrofa</name>
    <name type="common">Pig</name>
    <dbReference type="NCBI Taxonomy" id="9823"/>
</organismHost>
<feature type="chain" id="PRO_0000041102" description="Outer capsid protein VP4" evidence="1">
    <location>
        <begin position="1"/>
        <end position="775"/>
    </location>
</feature>
<feature type="chain" id="PRO_0000041103" description="Outer capsid protein VP8*" evidence="1">
    <location>
        <begin position="1"/>
        <end position="230"/>
    </location>
</feature>
<feature type="chain" id="PRO_0000041104" description="Outer capsid protein VP5*" evidence="1">
    <location>
        <begin position="247"/>
        <end position="775"/>
    </location>
</feature>
<feature type="region of interest" description="Spike head" evidence="1">
    <location>
        <begin position="65"/>
        <end position="223"/>
    </location>
</feature>
<feature type="region of interest" description="Spike body and stalk (antigen domain)" evidence="1">
    <location>
        <begin position="247"/>
        <end position="478"/>
    </location>
</feature>
<feature type="region of interest" description="Hydrophobic; possible role in virus entry into host cell" evidence="1">
    <location>
        <begin position="388"/>
        <end position="408"/>
    </location>
</feature>
<feature type="region of interest" description="Spike foot" evidence="1">
    <location>
        <begin position="509"/>
        <end position="775"/>
    </location>
</feature>
<feature type="coiled-coil region" evidence="1">
    <location>
        <begin position="483"/>
        <end position="515"/>
    </location>
</feature>
<feature type="short sequence motif" description="DGE motif; interaction with ITGA2/ITGB1 heterodimer" evidence="1">
    <location>
        <begin position="307"/>
        <end position="309"/>
    </location>
</feature>
<feature type="short sequence motif" description="YGL motif; interaction with ITGA4" evidence="1">
    <location>
        <begin position="447"/>
        <end position="449"/>
    </location>
</feature>
<feature type="site" description="Cleavage" evidence="1">
    <location>
        <begin position="230"/>
        <end position="231"/>
    </location>
</feature>
<feature type="site" description="Cleavage" evidence="1">
    <location>
        <begin position="240"/>
        <end position="241"/>
    </location>
</feature>
<feature type="site" description="Cleavage; associated with enhancement of infectivity" evidence="1">
    <location>
        <begin position="246"/>
        <end position="247"/>
    </location>
</feature>
<feature type="disulfide bond" evidence="1">
    <location>
        <begin position="317"/>
        <end position="379"/>
    </location>
</feature>
<accession>P23045</accession>
<protein>
    <recommendedName>
        <fullName evidence="1">Outer capsid protein VP4</fullName>
    </recommendedName>
    <alternativeName>
        <fullName evidence="1">Hemagglutinin</fullName>
    </alternativeName>
    <component>
        <recommendedName>
            <fullName evidence="1">Outer capsid protein VP8*</fullName>
        </recommendedName>
    </component>
    <component>
        <recommendedName>
            <fullName evidence="1">Outer capsid protein VP5*</fullName>
        </recommendedName>
    </component>
</protein>